<gene>
    <name evidence="1" type="primary">miaB</name>
    <name type="ordered locus">DVU_0984</name>
</gene>
<comment type="function">
    <text evidence="1">Catalyzes the methylthiolation of N6-(dimethylallyl)adenosine (i(6)A), leading to the formation of 2-methylthio-N6-(dimethylallyl)adenosine (ms(2)i(6)A) at position 37 in tRNAs that read codons beginning with uridine.</text>
</comment>
<comment type="catalytic activity">
    <reaction evidence="1">
        <text>N(6)-dimethylallyladenosine(37) in tRNA + (sulfur carrier)-SH + AH2 + 2 S-adenosyl-L-methionine = 2-methylsulfanyl-N(6)-dimethylallyladenosine(37) in tRNA + (sulfur carrier)-H + 5'-deoxyadenosine + L-methionine + A + S-adenosyl-L-homocysteine + 2 H(+)</text>
        <dbReference type="Rhea" id="RHEA:37067"/>
        <dbReference type="Rhea" id="RHEA-COMP:10375"/>
        <dbReference type="Rhea" id="RHEA-COMP:10376"/>
        <dbReference type="Rhea" id="RHEA-COMP:14737"/>
        <dbReference type="Rhea" id="RHEA-COMP:14739"/>
        <dbReference type="ChEBI" id="CHEBI:13193"/>
        <dbReference type="ChEBI" id="CHEBI:15378"/>
        <dbReference type="ChEBI" id="CHEBI:17319"/>
        <dbReference type="ChEBI" id="CHEBI:17499"/>
        <dbReference type="ChEBI" id="CHEBI:29917"/>
        <dbReference type="ChEBI" id="CHEBI:57844"/>
        <dbReference type="ChEBI" id="CHEBI:57856"/>
        <dbReference type="ChEBI" id="CHEBI:59789"/>
        <dbReference type="ChEBI" id="CHEBI:64428"/>
        <dbReference type="ChEBI" id="CHEBI:74415"/>
        <dbReference type="ChEBI" id="CHEBI:74417"/>
        <dbReference type="EC" id="2.8.4.3"/>
    </reaction>
</comment>
<comment type="cofactor">
    <cofactor evidence="1">
        <name>[4Fe-4S] cluster</name>
        <dbReference type="ChEBI" id="CHEBI:49883"/>
    </cofactor>
    <text evidence="1">Binds 2 [4Fe-4S] clusters. One cluster is coordinated with 3 cysteines and an exchangeable S-adenosyl-L-methionine.</text>
</comment>
<comment type="subunit">
    <text evidence="1">Monomer.</text>
</comment>
<comment type="subcellular location">
    <subcellularLocation>
        <location evidence="1">Cytoplasm</location>
    </subcellularLocation>
</comment>
<comment type="similarity">
    <text evidence="1">Belongs to the methylthiotransferase family. MiaB subfamily.</text>
</comment>
<accession>Q72DE5</accession>
<feature type="chain" id="PRO_0000374267" description="tRNA-2-methylthio-N(6)-dimethylallyladenosine synthase">
    <location>
        <begin position="1"/>
        <end position="449"/>
    </location>
</feature>
<feature type="domain" description="MTTase N-terminal" evidence="1">
    <location>
        <begin position="4"/>
        <end position="119"/>
    </location>
</feature>
<feature type="domain" description="Radical SAM core" evidence="2">
    <location>
        <begin position="144"/>
        <end position="375"/>
    </location>
</feature>
<feature type="domain" description="TRAM" evidence="1">
    <location>
        <begin position="378"/>
        <end position="446"/>
    </location>
</feature>
<feature type="binding site" evidence="1">
    <location>
        <position position="13"/>
    </location>
    <ligand>
        <name>[4Fe-4S] cluster</name>
        <dbReference type="ChEBI" id="CHEBI:49883"/>
        <label>1</label>
    </ligand>
</feature>
<feature type="binding site" evidence="1">
    <location>
        <position position="48"/>
    </location>
    <ligand>
        <name>[4Fe-4S] cluster</name>
        <dbReference type="ChEBI" id="CHEBI:49883"/>
        <label>1</label>
    </ligand>
</feature>
<feature type="binding site" evidence="1">
    <location>
        <position position="82"/>
    </location>
    <ligand>
        <name>[4Fe-4S] cluster</name>
        <dbReference type="ChEBI" id="CHEBI:49883"/>
        <label>1</label>
    </ligand>
</feature>
<feature type="binding site" evidence="1">
    <location>
        <position position="158"/>
    </location>
    <ligand>
        <name>[4Fe-4S] cluster</name>
        <dbReference type="ChEBI" id="CHEBI:49883"/>
        <label>2</label>
        <note>4Fe-4S-S-AdoMet</note>
    </ligand>
</feature>
<feature type="binding site" evidence="1">
    <location>
        <position position="162"/>
    </location>
    <ligand>
        <name>[4Fe-4S] cluster</name>
        <dbReference type="ChEBI" id="CHEBI:49883"/>
        <label>2</label>
        <note>4Fe-4S-S-AdoMet</note>
    </ligand>
</feature>
<feature type="binding site" evidence="1">
    <location>
        <position position="165"/>
    </location>
    <ligand>
        <name>[4Fe-4S] cluster</name>
        <dbReference type="ChEBI" id="CHEBI:49883"/>
        <label>2</label>
        <note>4Fe-4S-S-AdoMet</note>
    </ligand>
</feature>
<sequence>MHDRTFHIETFGCQMNVNDSDWLARALMERGFSPAPFGEARLTIVNTCSVRDKPEQKVYSLLGRIRQATSKKPDAFVAVGGCVAQQIGSGFFSRFPQVRLVFGTDGLAMAPQALDRLVEEPDLKLSLLDFSEDYPERDAVLGQGAVPASVFVNIMQGCDNFCAYCIVPYTRGRQKSRATGTILDECRALLDRGAREITLLGQNVNSFGQDSHGDGTTFAQLLHKVAALPGLERLRFVTPHPKDIAPEVVEAFGTLPNLCPRLHLPLQAGSDRILKLMGRRYDMARYLRIVDDLRAARPDIVLSSDIIVGFPGETEEDFMETMDALETVGYAASYSFCYSDRPGTRAEMLPDKLSREVKLERLERLQTLQNRLTERCLQDMVGRKVEVLLEGMSRKPGDEGDSWQGRDPYGNLVNVALPQGSDVRGRFLPVVVAQAKKHSLLAEQAGAPW</sequence>
<protein>
    <recommendedName>
        <fullName evidence="1">tRNA-2-methylthio-N(6)-dimethylallyladenosine synthase</fullName>
        <ecNumber evidence="1">2.8.4.3</ecNumber>
    </recommendedName>
    <alternativeName>
        <fullName evidence="1">(Dimethylallyl)adenosine tRNA methylthiotransferase MiaB</fullName>
    </alternativeName>
    <alternativeName>
        <fullName evidence="1">tRNA-i(6)A37 methylthiotransferase</fullName>
    </alternativeName>
</protein>
<keyword id="KW-0004">4Fe-4S</keyword>
<keyword id="KW-0963">Cytoplasm</keyword>
<keyword id="KW-0408">Iron</keyword>
<keyword id="KW-0411">Iron-sulfur</keyword>
<keyword id="KW-0479">Metal-binding</keyword>
<keyword id="KW-1185">Reference proteome</keyword>
<keyword id="KW-0949">S-adenosyl-L-methionine</keyword>
<keyword id="KW-0808">Transferase</keyword>
<keyword id="KW-0819">tRNA processing</keyword>
<proteinExistence type="inferred from homology"/>
<organism>
    <name type="scientific">Nitratidesulfovibrio vulgaris (strain ATCC 29579 / DSM 644 / CCUG 34227 / NCIMB 8303 / VKM B-1760 / Hildenborough)</name>
    <name type="common">Desulfovibrio vulgaris</name>
    <dbReference type="NCBI Taxonomy" id="882"/>
    <lineage>
        <taxon>Bacteria</taxon>
        <taxon>Pseudomonadati</taxon>
        <taxon>Thermodesulfobacteriota</taxon>
        <taxon>Desulfovibrionia</taxon>
        <taxon>Desulfovibrionales</taxon>
        <taxon>Desulfovibrionaceae</taxon>
        <taxon>Nitratidesulfovibrio</taxon>
    </lineage>
</organism>
<name>MIAB_NITV2</name>
<evidence type="ECO:0000255" key="1">
    <source>
        <dbReference type="HAMAP-Rule" id="MF_01864"/>
    </source>
</evidence>
<evidence type="ECO:0000255" key="2">
    <source>
        <dbReference type="PROSITE-ProRule" id="PRU01266"/>
    </source>
</evidence>
<reference key="1">
    <citation type="journal article" date="2004" name="Nat. Biotechnol.">
        <title>The genome sequence of the anaerobic, sulfate-reducing bacterium Desulfovibrio vulgaris Hildenborough.</title>
        <authorList>
            <person name="Heidelberg J.F."/>
            <person name="Seshadri R."/>
            <person name="Haveman S.A."/>
            <person name="Hemme C.L."/>
            <person name="Paulsen I.T."/>
            <person name="Kolonay J.F."/>
            <person name="Eisen J.A."/>
            <person name="Ward N.L."/>
            <person name="Methe B.A."/>
            <person name="Brinkac L.M."/>
            <person name="Daugherty S.C."/>
            <person name="DeBoy R.T."/>
            <person name="Dodson R.J."/>
            <person name="Durkin A.S."/>
            <person name="Madupu R."/>
            <person name="Nelson W.C."/>
            <person name="Sullivan S.A."/>
            <person name="Fouts D.E."/>
            <person name="Haft D.H."/>
            <person name="Selengut J."/>
            <person name="Peterson J.D."/>
            <person name="Davidsen T.M."/>
            <person name="Zafar N."/>
            <person name="Zhou L."/>
            <person name="Radune D."/>
            <person name="Dimitrov G."/>
            <person name="Hance M."/>
            <person name="Tran K."/>
            <person name="Khouri H.M."/>
            <person name="Gill J."/>
            <person name="Utterback T.R."/>
            <person name="Feldblyum T.V."/>
            <person name="Wall J.D."/>
            <person name="Voordouw G."/>
            <person name="Fraser C.M."/>
        </authorList>
    </citation>
    <scope>NUCLEOTIDE SEQUENCE [LARGE SCALE GENOMIC DNA]</scope>
    <source>
        <strain>ATCC 29579 / DSM 644 / CCUG 34227 / NCIMB 8303 / VKM B-1760 / Hildenborough</strain>
    </source>
</reference>
<dbReference type="EC" id="2.8.4.3" evidence="1"/>
<dbReference type="EMBL" id="AE017285">
    <property type="protein sequence ID" value="AAS95464.1"/>
    <property type="molecule type" value="Genomic_DNA"/>
</dbReference>
<dbReference type="RefSeq" id="WP_010938283.1">
    <property type="nucleotide sequence ID" value="NC_002937.3"/>
</dbReference>
<dbReference type="RefSeq" id="YP_010205.1">
    <property type="nucleotide sequence ID" value="NC_002937.3"/>
</dbReference>
<dbReference type="SMR" id="Q72DE5"/>
<dbReference type="IntAct" id="Q72DE5">
    <property type="interactions" value="1"/>
</dbReference>
<dbReference type="STRING" id="882.DVU_0984"/>
<dbReference type="PaxDb" id="882-DVU_0984"/>
<dbReference type="EnsemblBacteria" id="AAS95464">
    <property type="protein sequence ID" value="AAS95464"/>
    <property type="gene ID" value="DVU_0984"/>
</dbReference>
<dbReference type="KEGG" id="dvu:DVU_0984"/>
<dbReference type="PATRIC" id="fig|882.5.peg.927"/>
<dbReference type="eggNOG" id="COG0621">
    <property type="taxonomic scope" value="Bacteria"/>
</dbReference>
<dbReference type="HOGENOM" id="CLU_018697_2_2_7"/>
<dbReference type="OrthoDB" id="9805215at2"/>
<dbReference type="PhylomeDB" id="Q72DE5"/>
<dbReference type="Proteomes" id="UP000002194">
    <property type="component" value="Chromosome"/>
</dbReference>
<dbReference type="GO" id="GO:0005829">
    <property type="term" value="C:cytosol"/>
    <property type="evidence" value="ECO:0007669"/>
    <property type="project" value="TreeGrafter"/>
</dbReference>
<dbReference type="GO" id="GO:0051539">
    <property type="term" value="F:4 iron, 4 sulfur cluster binding"/>
    <property type="evidence" value="ECO:0007669"/>
    <property type="project" value="UniProtKB-UniRule"/>
</dbReference>
<dbReference type="GO" id="GO:0046872">
    <property type="term" value="F:metal ion binding"/>
    <property type="evidence" value="ECO:0007669"/>
    <property type="project" value="UniProtKB-KW"/>
</dbReference>
<dbReference type="GO" id="GO:0035597">
    <property type="term" value="F:N6-isopentenyladenosine methylthiotransferase activity"/>
    <property type="evidence" value="ECO:0007669"/>
    <property type="project" value="TreeGrafter"/>
</dbReference>
<dbReference type="CDD" id="cd01335">
    <property type="entry name" value="Radical_SAM"/>
    <property type="match status" value="1"/>
</dbReference>
<dbReference type="FunFam" id="3.40.50.12160:FF:000003">
    <property type="entry name" value="CDK5 regulatory subunit-associated protein 1"/>
    <property type="match status" value="1"/>
</dbReference>
<dbReference type="FunFam" id="3.80.30.20:FF:000001">
    <property type="entry name" value="tRNA-2-methylthio-N(6)-dimethylallyladenosine synthase 2"/>
    <property type="match status" value="1"/>
</dbReference>
<dbReference type="Gene3D" id="3.40.50.12160">
    <property type="entry name" value="Methylthiotransferase, N-terminal domain"/>
    <property type="match status" value="1"/>
</dbReference>
<dbReference type="Gene3D" id="3.80.30.20">
    <property type="entry name" value="tm_1862 like domain"/>
    <property type="match status" value="1"/>
</dbReference>
<dbReference type="HAMAP" id="MF_01864">
    <property type="entry name" value="tRNA_metthiotr_MiaB"/>
    <property type="match status" value="1"/>
</dbReference>
<dbReference type="InterPro" id="IPR006638">
    <property type="entry name" value="Elp3/MiaA/NifB-like_rSAM"/>
</dbReference>
<dbReference type="InterPro" id="IPR005839">
    <property type="entry name" value="Methylthiotransferase"/>
</dbReference>
<dbReference type="InterPro" id="IPR020612">
    <property type="entry name" value="Methylthiotransferase_CS"/>
</dbReference>
<dbReference type="InterPro" id="IPR013848">
    <property type="entry name" value="Methylthiotransferase_N"/>
</dbReference>
<dbReference type="InterPro" id="IPR038135">
    <property type="entry name" value="Methylthiotransferase_N_sf"/>
</dbReference>
<dbReference type="InterPro" id="IPR006463">
    <property type="entry name" value="MiaB_methiolase"/>
</dbReference>
<dbReference type="InterPro" id="IPR007197">
    <property type="entry name" value="rSAM"/>
</dbReference>
<dbReference type="InterPro" id="IPR023404">
    <property type="entry name" value="rSAM_horseshoe"/>
</dbReference>
<dbReference type="InterPro" id="IPR002792">
    <property type="entry name" value="TRAM_dom"/>
</dbReference>
<dbReference type="NCBIfam" id="TIGR01574">
    <property type="entry name" value="miaB-methiolase"/>
    <property type="match status" value="1"/>
</dbReference>
<dbReference type="NCBIfam" id="TIGR00089">
    <property type="entry name" value="MiaB/RimO family radical SAM methylthiotransferase"/>
    <property type="match status" value="1"/>
</dbReference>
<dbReference type="PANTHER" id="PTHR43020">
    <property type="entry name" value="CDK5 REGULATORY SUBUNIT-ASSOCIATED PROTEIN 1"/>
    <property type="match status" value="1"/>
</dbReference>
<dbReference type="PANTHER" id="PTHR43020:SF2">
    <property type="entry name" value="MITOCHONDRIAL TRNA METHYLTHIOTRANSFERASE CDK5RAP1"/>
    <property type="match status" value="1"/>
</dbReference>
<dbReference type="Pfam" id="PF04055">
    <property type="entry name" value="Radical_SAM"/>
    <property type="match status" value="1"/>
</dbReference>
<dbReference type="Pfam" id="PF00919">
    <property type="entry name" value="UPF0004"/>
    <property type="match status" value="1"/>
</dbReference>
<dbReference type="SFLD" id="SFLDF00273">
    <property type="entry name" value="(dimethylallyl)adenosine_tRNA"/>
    <property type="match status" value="1"/>
</dbReference>
<dbReference type="SFLD" id="SFLDG01082">
    <property type="entry name" value="B12-binding_domain_containing"/>
    <property type="match status" value="1"/>
</dbReference>
<dbReference type="SFLD" id="SFLDG01061">
    <property type="entry name" value="methylthiotransferase"/>
    <property type="match status" value="1"/>
</dbReference>
<dbReference type="SMART" id="SM00729">
    <property type="entry name" value="Elp3"/>
    <property type="match status" value="1"/>
</dbReference>
<dbReference type="SUPFAM" id="SSF102114">
    <property type="entry name" value="Radical SAM enzymes"/>
    <property type="match status" value="1"/>
</dbReference>
<dbReference type="PROSITE" id="PS51449">
    <property type="entry name" value="MTTASE_N"/>
    <property type="match status" value="1"/>
</dbReference>
<dbReference type="PROSITE" id="PS01278">
    <property type="entry name" value="MTTASE_RADICAL"/>
    <property type="match status" value="1"/>
</dbReference>
<dbReference type="PROSITE" id="PS51918">
    <property type="entry name" value="RADICAL_SAM"/>
    <property type="match status" value="1"/>
</dbReference>
<dbReference type="PROSITE" id="PS50926">
    <property type="entry name" value="TRAM"/>
    <property type="match status" value="1"/>
</dbReference>